<reference key="1">
    <citation type="journal article" date="2002" name="J. Biol. Chem.">
        <title>A novel candidate for the true fructose-1,6-bisphosphatase in archaea.</title>
        <authorList>
            <person name="Rashid N."/>
            <person name="Imanaka H."/>
            <person name="Kanai T."/>
            <person name="Fukui T."/>
            <person name="Atomi H."/>
            <person name="Imanaka T."/>
        </authorList>
    </citation>
    <scope>NUCLEOTIDE SEQUENCE [GENOMIC DNA]</scope>
    <scope>PROTEIN SEQUENCE OF 2-16</scope>
    <scope>FUNCTION AS A FBPASE</scope>
    <scope>CATALYTIC ACTIVITY</scope>
    <scope>SUBSTRATE SPECIFICITY</scope>
    <scope>BIOPHYSICOCHEMICAL PROPERTIES</scope>
    <scope>COFACTOR</scope>
    <scope>ACTIVITY REGULATION</scope>
    <scope>SUBUNIT</scope>
    <scope>INDUCTION</scope>
    <source>
        <strain>ATCC BAA-918 / JCM 12380 / KOD1</strain>
    </source>
</reference>
<reference key="2">
    <citation type="journal article" date="2005" name="Genome Res.">
        <title>Complete genome sequence of the hyperthermophilic archaeon Thermococcus kodakaraensis KOD1 and comparison with Pyrococcus genomes.</title>
        <authorList>
            <person name="Fukui T."/>
            <person name="Atomi H."/>
            <person name="Kanai T."/>
            <person name="Matsumi R."/>
            <person name="Fujiwara S."/>
            <person name="Imanaka T."/>
        </authorList>
    </citation>
    <scope>NUCLEOTIDE SEQUENCE [LARGE SCALE GENOMIC DNA]</scope>
    <source>
        <strain>ATCC BAA-918 / JCM 12380 / KOD1</strain>
    </source>
</reference>
<reference key="3">
    <citation type="journal article" date="2004" name="J. Bacteriol.">
        <title>Genetic evidence identifying the true gluconeogenic fructose-1,6-bisphosphatase in Thermococcus kodakaraensis and other hyperthermophiles.</title>
        <authorList>
            <person name="Sato T."/>
            <person name="Imanaka H."/>
            <person name="Rashid N."/>
            <person name="Fukui T."/>
            <person name="Atomi H."/>
            <person name="Imanaka T."/>
        </authorList>
    </citation>
    <scope>FUNCTION</scope>
    <scope>DISRUPTION PHENOTYPE</scope>
    <scope>PATHWAY</scope>
    <source>
        <strain>ATCC BAA-918 / JCM 12380 / KOD1</strain>
    </source>
</reference>
<reference key="4">
    <citation type="journal article" date="2010" name="Nature">
        <title>Fructose 1,6-bisphosphate aldolase/phosphatase may be an ancestral gluconeogenic enzyme.</title>
        <authorList>
            <person name="Say R.F."/>
            <person name="Fuchs G."/>
        </authorList>
    </citation>
    <scope>FUNCTION AS BOTH FBPASE AND FBP ALDOLASE</scope>
    <scope>CATALYTIC ACTIVITY</scope>
    <scope>PATHWAY</scope>
    <source>
        <strain>ATCC BAA-918 / JCM 12380 / KOD1</strain>
    </source>
</reference>
<gene>
    <name evidence="6" type="primary">fbp</name>
    <name evidence="11" type="ordered locus">TK2164</name>
</gene>
<dbReference type="EC" id="3.1.3.11" evidence="3 5"/>
<dbReference type="EC" id="4.1.2.13" evidence="5"/>
<dbReference type="EMBL" id="AB081839">
    <property type="protein sequence ID" value="BAC10571.1"/>
    <property type="molecule type" value="Genomic_DNA"/>
</dbReference>
<dbReference type="EMBL" id="AP006878">
    <property type="protein sequence ID" value="BAD86353.1"/>
    <property type="molecule type" value="Genomic_DNA"/>
</dbReference>
<dbReference type="RefSeq" id="WP_011251114.1">
    <property type="nucleotide sequence ID" value="NC_006624.1"/>
</dbReference>
<dbReference type="SMR" id="Q8NKR9"/>
<dbReference type="FunCoup" id="Q8NKR9">
    <property type="interactions" value="85"/>
</dbReference>
<dbReference type="IntAct" id="Q8NKR9">
    <property type="interactions" value="1"/>
</dbReference>
<dbReference type="MINT" id="Q8NKR9"/>
<dbReference type="STRING" id="69014.TK2164"/>
<dbReference type="EnsemblBacteria" id="BAD86353">
    <property type="protein sequence ID" value="BAD86353"/>
    <property type="gene ID" value="TK2164"/>
</dbReference>
<dbReference type="GeneID" id="78448702"/>
<dbReference type="KEGG" id="tko:TK2164"/>
<dbReference type="PATRIC" id="fig|69014.16.peg.2119"/>
<dbReference type="eggNOG" id="arCOG04180">
    <property type="taxonomic scope" value="Archaea"/>
</dbReference>
<dbReference type="HOGENOM" id="CLU_041630_0_0_2"/>
<dbReference type="InParanoid" id="Q8NKR9"/>
<dbReference type="OrthoDB" id="5829at2157"/>
<dbReference type="PhylomeDB" id="Q8NKR9"/>
<dbReference type="BRENDA" id="3.1.3.11">
    <property type="organism ID" value="5246"/>
</dbReference>
<dbReference type="UniPathway" id="UPA00138"/>
<dbReference type="Proteomes" id="UP000000536">
    <property type="component" value="Chromosome"/>
</dbReference>
<dbReference type="GO" id="GO:0042132">
    <property type="term" value="F:fructose 1,6-bisphosphate 1-phosphatase activity"/>
    <property type="evidence" value="ECO:0007669"/>
    <property type="project" value="UniProtKB-UniRule"/>
</dbReference>
<dbReference type="GO" id="GO:0004332">
    <property type="term" value="F:fructose-bisphosphate aldolase activity"/>
    <property type="evidence" value="ECO:0007669"/>
    <property type="project" value="UniProtKB-UniRule"/>
</dbReference>
<dbReference type="GO" id="GO:0000287">
    <property type="term" value="F:magnesium ion binding"/>
    <property type="evidence" value="ECO:0007669"/>
    <property type="project" value="UniProtKB-UniRule"/>
</dbReference>
<dbReference type="GO" id="GO:0006094">
    <property type="term" value="P:gluconeogenesis"/>
    <property type="evidence" value="ECO:0007669"/>
    <property type="project" value="UniProtKB-UniRule"/>
</dbReference>
<dbReference type="HAMAP" id="MF_02067">
    <property type="entry name" value="FBP_aldolase_phosphatase"/>
    <property type="match status" value="1"/>
</dbReference>
<dbReference type="InterPro" id="IPR002803">
    <property type="entry name" value="FBPase_V"/>
</dbReference>
<dbReference type="InterPro" id="IPR036076">
    <property type="entry name" value="FBPase_V_sf"/>
</dbReference>
<dbReference type="NCBIfam" id="NF041126">
    <property type="entry name" value="FBP_aldo_phos"/>
    <property type="match status" value="1"/>
</dbReference>
<dbReference type="PANTHER" id="PTHR38341">
    <property type="entry name" value="FRUCTOSE-1,6-BISPHOSPHATE ALDOLASE/PHOSPHATASE"/>
    <property type="match status" value="1"/>
</dbReference>
<dbReference type="PANTHER" id="PTHR38341:SF1">
    <property type="entry name" value="FRUCTOSE-1,6-BISPHOSPHATE ALDOLASE_PHOSPHATASE"/>
    <property type="match status" value="1"/>
</dbReference>
<dbReference type="Pfam" id="PF01950">
    <property type="entry name" value="FBPase_3"/>
    <property type="match status" value="1"/>
</dbReference>
<dbReference type="PIRSF" id="PIRSF015647">
    <property type="entry name" value="FBPtase_archl"/>
    <property type="match status" value="1"/>
</dbReference>
<dbReference type="SUPFAM" id="SSF111249">
    <property type="entry name" value="Sulfolobus fructose-1,6-bisphosphatase-like"/>
    <property type="match status" value="1"/>
</dbReference>
<dbReference type="PROSITE" id="PS00159">
    <property type="entry name" value="ALDOLASE_KDPG_KHG_1"/>
    <property type="match status" value="1"/>
</dbReference>
<name>FBPAP_THEKO</name>
<protein>
    <recommendedName>
        <fullName evidence="7">Fructose-1,6-bisphosphate aldolase/phosphatase</fullName>
        <shortName evidence="2">FBP A/P</shortName>
        <shortName evidence="7">FBP aldolase/phosphatase</shortName>
        <ecNumber evidence="3 5">3.1.3.11</ecNumber>
        <ecNumber evidence="5">4.1.2.13</ecNumber>
    </recommendedName>
    <alternativeName>
        <fullName evidence="6">Fructose-1,6-bisphosphatase</fullName>
        <shortName evidence="6">FBPase</shortName>
    </alternativeName>
</protein>
<feature type="initiator methionine" description="Removed" evidence="3">
    <location>
        <position position="1"/>
    </location>
</feature>
<feature type="chain" id="PRO_0000437185" description="Fructose-1,6-bisphosphate aldolase/phosphatase">
    <location>
        <begin position="2"/>
        <end position="375"/>
    </location>
</feature>
<feature type="active site" description="Proton acceptor; for FBP phosphatase activity" evidence="1">
    <location>
        <position position="15"/>
    </location>
</feature>
<feature type="active site" description="Proton donor/acceptor; for FBP aldolase activity" evidence="1">
    <location>
        <position position="237"/>
    </location>
</feature>
<feature type="active site" description="Schiff-base intermediate with DHAP; for FBP aldolase activity" evidence="1">
    <location>
        <position position="240"/>
    </location>
</feature>
<feature type="binding site" evidence="1">
    <location>
        <position position="15"/>
    </location>
    <ligand>
        <name>Mg(2+)</name>
        <dbReference type="ChEBI" id="CHEBI:18420"/>
        <label>1</label>
    </ligand>
</feature>
<feature type="binding site" description="in other chain" evidence="1">
    <location>
        <position position="22"/>
    </location>
    <ligand>
        <name>beta-D-fructose 1,6-bisphosphate</name>
        <dbReference type="ChEBI" id="CHEBI:32966"/>
        <note>ligand shared between dimeric partners</note>
    </ligand>
</feature>
<feature type="binding site" evidence="1">
    <location>
        <position position="22"/>
    </location>
    <ligand>
        <name>dihydroxyacetone phosphate</name>
        <dbReference type="ChEBI" id="CHEBI:57642"/>
    </ligand>
</feature>
<feature type="binding site" evidence="1">
    <location>
        <position position="22"/>
    </location>
    <ligand>
        <name>Mg(2+)</name>
        <dbReference type="ChEBI" id="CHEBI:18420"/>
        <label>1</label>
    </ligand>
</feature>
<feature type="binding site" evidence="1">
    <location>
        <position position="56"/>
    </location>
    <ligand>
        <name>Mg(2+)</name>
        <dbReference type="ChEBI" id="CHEBI:18420"/>
        <label>1</label>
    </ligand>
</feature>
<feature type="binding site" evidence="1">
    <location>
        <position position="56"/>
    </location>
    <ligand>
        <name>Mg(2+)</name>
        <dbReference type="ChEBI" id="CHEBI:18420"/>
        <label>2</label>
    </ligand>
</feature>
<feature type="binding site" evidence="1">
    <location>
        <position position="57"/>
    </location>
    <ligand>
        <name>Mg(2+)</name>
        <dbReference type="ChEBI" id="CHEBI:18420"/>
        <label>2</label>
    </ligand>
</feature>
<feature type="binding site" description="in other chain" evidence="1">
    <location>
        <position position="94"/>
    </location>
    <ligand>
        <name>beta-D-fructose 1,6-bisphosphate</name>
        <dbReference type="ChEBI" id="CHEBI:32966"/>
        <note>ligand shared between dimeric partners</note>
    </ligand>
</feature>
<feature type="binding site" evidence="1">
    <location>
        <position position="98"/>
    </location>
    <ligand>
        <name>Mg(2+)</name>
        <dbReference type="ChEBI" id="CHEBI:18420"/>
        <label>1</label>
    </ligand>
</feature>
<feature type="binding site" description="in other chain" evidence="1">
    <location>
        <begin position="107"/>
        <end position="108"/>
    </location>
    <ligand>
        <name>beta-D-fructose 1,6-bisphosphate</name>
        <dbReference type="ChEBI" id="CHEBI:32966"/>
        <note>ligand shared between dimeric partners</note>
    </ligand>
</feature>
<feature type="binding site" evidence="1">
    <location>
        <position position="135"/>
    </location>
    <ligand>
        <name>Mg(2+)</name>
        <dbReference type="ChEBI" id="CHEBI:18420"/>
        <label>2</label>
    </ligand>
</feature>
<feature type="binding site" description="in other chain" evidence="1">
    <location>
        <position position="136"/>
    </location>
    <ligand>
        <name>beta-D-fructose 1,6-bisphosphate</name>
        <dbReference type="ChEBI" id="CHEBI:32966"/>
        <note>ligand shared between dimeric partners</note>
    </ligand>
</feature>
<feature type="binding site" evidence="1">
    <location>
        <position position="136"/>
    </location>
    <ligand>
        <name>dihydroxyacetone phosphate</name>
        <dbReference type="ChEBI" id="CHEBI:57642"/>
    </ligand>
</feature>
<feature type="binding site" evidence="1">
    <location>
        <position position="240"/>
    </location>
    <ligand>
        <name>Mg(2+)</name>
        <dbReference type="ChEBI" id="CHEBI:18420"/>
        <label>3</label>
    </ligand>
</feature>
<feature type="binding site" evidence="1">
    <location>
        <position position="241"/>
    </location>
    <ligand>
        <name>Mg(2+)</name>
        <dbReference type="ChEBI" id="CHEBI:18420"/>
        <label>3</label>
    </ligand>
</feature>
<feature type="binding site" evidence="1">
    <location>
        <position position="241"/>
    </location>
    <ligand>
        <name>Mg(2+)</name>
        <dbReference type="ChEBI" id="CHEBI:18420"/>
        <label>4</label>
    </ligand>
</feature>
<feature type="binding site" evidence="1">
    <location>
        <position position="242"/>
    </location>
    <ligand>
        <name>Mg(2+)</name>
        <dbReference type="ChEBI" id="CHEBI:18420"/>
        <label>2</label>
    </ligand>
</feature>
<feature type="binding site" evidence="1">
    <location>
        <position position="242"/>
    </location>
    <ligand>
        <name>Mg(2+)</name>
        <dbReference type="ChEBI" id="CHEBI:18420"/>
        <label>3</label>
    </ligand>
</feature>
<feature type="binding site" evidence="1">
    <location>
        <begin position="250"/>
        <end position="251"/>
    </location>
    <ligand>
        <name>beta-D-fructose 1,6-bisphosphate</name>
        <dbReference type="ChEBI" id="CHEBI:32966"/>
        <note>ligand shared between dimeric partners</note>
    </ligand>
</feature>
<feature type="binding site" description="in other chain" evidence="1">
    <location>
        <position position="274"/>
    </location>
    <ligand>
        <name>beta-D-fructose 1,6-bisphosphate</name>
        <dbReference type="ChEBI" id="CHEBI:32966"/>
        <note>ligand shared between dimeric partners</note>
    </ligand>
</feature>
<feature type="binding site" evidence="1">
    <location>
        <position position="274"/>
    </location>
    <ligand>
        <name>dihydroxyacetone phosphate</name>
        <dbReference type="ChEBI" id="CHEBI:57642"/>
    </ligand>
</feature>
<feature type="binding site" description="in other chain" evidence="1">
    <location>
        <position position="295"/>
    </location>
    <ligand>
        <name>beta-D-fructose 1,6-bisphosphate</name>
        <dbReference type="ChEBI" id="CHEBI:32966"/>
        <note>ligand shared between dimeric partners</note>
    </ligand>
</feature>
<feature type="binding site" evidence="1">
    <location>
        <position position="295"/>
    </location>
    <ligand>
        <name>dihydroxyacetone phosphate</name>
        <dbReference type="ChEBI" id="CHEBI:57642"/>
    </ligand>
</feature>
<feature type="binding site" description="in other chain" evidence="1">
    <location>
        <position position="357"/>
    </location>
    <ligand>
        <name>beta-D-fructose 1,6-bisphosphate</name>
        <dbReference type="ChEBI" id="CHEBI:32966"/>
        <note>ligand shared between dimeric partners</note>
    </ligand>
</feature>
<keyword id="KW-0119">Carbohydrate metabolism</keyword>
<keyword id="KW-0903">Direct protein sequencing</keyword>
<keyword id="KW-0312">Gluconeogenesis</keyword>
<keyword id="KW-0378">Hydrolase</keyword>
<keyword id="KW-0456">Lyase</keyword>
<keyword id="KW-0460">Magnesium</keyword>
<keyword id="KW-0479">Metal-binding</keyword>
<keyword id="KW-1185">Reference proteome</keyword>
<keyword id="KW-0704">Schiff base</keyword>
<accession>Q8NKR9</accession>
<accession>Q5JHJ3</accession>
<comment type="function">
    <text evidence="3 4 5">Catalyzes two subsequent steps in gluconeogenesis: the aldol condensation of dihydroxyacetone phosphate (DHAP) and glyceraldehyde-3-phosphate (GA3P) to fructose-1,6-bisphosphate (FBP), and the dephosphorylation of FBP to fructose-6-phosphate (F6P) (PubMed:12065581, PubMed:20348906). Does not display hydrolase activity against fructose 2,6-bisphosphate, fructose 6-phosphate, fructose 1-phosphate, glucose 6-phosphate, and glucose 1-phosphate (PubMed:12065581). Exhibits only negligible activity on inositol-1-phosphate (IMP) (PubMed:15317785). Is essential for the growth of T.kodakaraensis under gluconeogenic conditions (PubMed:15317785).</text>
</comment>
<comment type="catalytic activity">
    <reaction evidence="3 5">
        <text>beta-D-fructose 1,6-bisphosphate + H2O = beta-D-fructose 6-phosphate + phosphate</text>
        <dbReference type="Rhea" id="RHEA:11064"/>
        <dbReference type="ChEBI" id="CHEBI:15377"/>
        <dbReference type="ChEBI" id="CHEBI:32966"/>
        <dbReference type="ChEBI" id="CHEBI:43474"/>
        <dbReference type="ChEBI" id="CHEBI:57634"/>
        <dbReference type="EC" id="3.1.3.11"/>
    </reaction>
</comment>
<comment type="catalytic activity">
    <reaction evidence="5">
        <text>beta-D-fructose 1,6-bisphosphate = D-glyceraldehyde 3-phosphate + dihydroxyacetone phosphate</text>
        <dbReference type="Rhea" id="RHEA:14729"/>
        <dbReference type="ChEBI" id="CHEBI:32966"/>
        <dbReference type="ChEBI" id="CHEBI:57642"/>
        <dbReference type="ChEBI" id="CHEBI:59776"/>
        <dbReference type="EC" id="4.1.2.13"/>
    </reaction>
</comment>
<comment type="cofactor">
    <cofactor evidence="9">
        <name>Mg(2+)</name>
        <dbReference type="ChEBI" id="CHEBI:18420"/>
    </cofactor>
</comment>
<comment type="activity regulation">
    <text evidence="3">Activity is enhanced by dithioerythritol, and is slightly inhibited by fructose 2,6-bisphosphate. AMP does not inhibit the enzyme activity.</text>
</comment>
<comment type="biophysicochemical properties">
    <kinetics>
        <KM evidence="3">100 uM for D-fructose 1,6-bisphosphate (when assaying the FBPase activity, at 95 degrees Celsius)</KM>
        <text evidence="3">kcat is 17 sec(-1) for the FBPase activity (at 95 degrees Celsius). kcat is 7 sec(-1) for the FBPase activity (at 85 degrees Celsius). kcat is 2.9 sec(-1) for the FBPase activity (at 37 degrees Celsius).</text>
    </kinetics>
    <phDependence>
        <text evidence="3">Optimum pH is 8.0.</text>
    </phDependence>
    <temperatureDependence>
        <text evidence="3">Optimum temperature is over 95 degrees Celsius. The enzyme shows a nearly linear increase in activity between 37 and 95 degrees Celsius, with a 6-fold increase between these temperatures. Is highly thermostable, displaying a half-life of 150 minutes in boiling water.</text>
    </temperatureDependence>
</comment>
<comment type="pathway">
    <text evidence="4 10">Carbohydrate biosynthesis; gluconeogenesis.</text>
</comment>
<comment type="subunit">
    <text evidence="1 3">Homooctamer; dimer of tetramers.</text>
</comment>
<comment type="induction">
    <text evidence="3">High levels of transcripts are detected in cells grown on pyruvate or amino acids, whereas no transcription is detected when starch is present in the medium, revealing a sugar-repressed gene expression.</text>
</comment>
<comment type="domain">
    <text evidence="1">Consists of a single catalytic domain, but remodels its active-site architecture via a large structural change to exhibit dual activities.</text>
</comment>
<comment type="disruption phenotype">
    <text evidence="4">Cells lacking this gene cannot grow under gluconeogenic conditions while glycolytic growth is unimpaired, and the gene disruption results in the complete abolishment of intracellular FBPase activity.</text>
</comment>
<comment type="similarity">
    <text evidence="2 8">Belongs to the FBP aldolase/phosphatase family.</text>
</comment>
<proteinExistence type="evidence at protein level"/>
<evidence type="ECO:0000250" key="1">
    <source>
        <dbReference type="UniProtKB" id="F9VMT6"/>
    </source>
</evidence>
<evidence type="ECO:0000255" key="2">
    <source>
        <dbReference type="HAMAP-Rule" id="MF_02067"/>
    </source>
</evidence>
<evidence type="ECO:0000269" key="3">
    <source>
    </source>
</evidence>
<evidence type="ECO:0000269" key="4">
    <source>
    </source>
</evidence>
<evidence type="ECO:0000269" key="5">
    <source>
    </source>
</evidence>
<evidence type="ECO:0000303" key="6">
    <source>
    </source>
</evidence>
<evidence type="ECO:0000303" key="7">
    <source>
    </source>
</evidence>
<evidence type="ECO:0000305" key="8"/>
<evidence type="ECO:0000305" key="9">
    <source>
    </source>
</evidence>
<evidence type="ECO:0000305" key="10">
    <source>
    </source>
</evidence>
<evidence type="ECO:0000312" key="11">
    <source>
        <dbReference type="EMBL" id="BAD86353.1"/>
    </source>
</evidence>
<sequence length="375" mass="41661">MAVGDKITISVIKADIGGWPGHSRVHPQLVETAEDVLSKAVEDGTIIDFYVATCGDDLQLIMTHKRGVDSPDIHGLAWKAFEEATKVAKELGLYGAGQDLLKDAFSGNVRGMGPGVAEMEITLRKSEPVVTFHMDKTEPGAFNLPIFRMFADPFNTAGLIIDPKMHMGFRFEVWDILEHKRVILNTPEELYDLLALIGAKSRYVIKRVYPKPGHPIPENEPVAVVSTEKLYEVAGEYVGKDDPVAIVRAQSGLPALGEVLEPFAFPHLVSGWMRGSHNGPLMPVPMHQANPTRFDGPPRVVALGWQISPEGKLVGPVDLFDDPAFDYARQKALEITEYMRRHGPFEPHRLPLEEMEYTTLPGVLKRLTDRFEPIE</sequence>
<organism>
    <name type="scientific">Thermococcus kodakarensis (strain ATCC BAA-918 / JCM 12380 / KOD1)</name>
    <name type="common">Pyrococcus kodakaraensis (strain KOD1)</name>
    <dbReference type="NCBI Taxonomy" id="69014"/>
    <lineage>
        <taxon>Archaea</taxon>
        <taxon>Methanobacteriati</taxon>
        <taxon>Methanobacteriota</taxon>
        <taxon>Thermococci</taxon>
        <taxon>Thermococcales</taxon>
        <taxon>Thermococcaceae</taxon>
        <taxon>Thermococcus</taxon>
    </lineage>
</organism>